<reference key="1">
    <citation type="journal article" date="2005" name="J. Bacteriol.">
        <title>Insights on evolution of virulence and resistance from the complete genome analysis of an early methicillin-resistant Staphylococcus aureus strain and a biofilm-producing methicillin-resistant Staphylococcus epidermidis strain.</title>
        <authorList>
            <person name="Gill S.R."/>
            <person name="Fouts D.E."/>
            <person name="Archer G.L."/>
            <person name="Mongodin E.F."/>
            <person name="DeBoy R.T."/>
            <person name="Ravel J."/>
            <person name="Paulsen I.T."/>
            <person name="Kolonay J.F."/>
            <person name="Brinkac L.M."/>
            <person name="Beanan M.J."/>
            <person name="Dodson R.J."/>
            <person name="Daugherty S.C."/>
            <person name="Madupu R."/>
            <person name="Angiuoli S.V."/>
            <person name="Durkin A.S."/>
            <person name="Haft D.H."/>
            <person name="Vamathevan J.J."/>
            <person name="Khouri H."/>
            <person name="Utterback T.R."/>
            <person name="Lee C."/>
            <person name="Dimitrov G."/>
            <person name="Jiang L."/>
            <person name="Qin H."/>
            <person name="Weidman J."/>
            <person name="Tran K."/>
            <person name="Kang K.H."/>
            <person name="Hance I.R."/>
            <person name="Nelson K.E."/>
            <person name="Fraser C.M."/>
        </authorList>
    </citation>
    <scope>NUCLEOTIDE SEQUENCE [LARGE SCALE GENOMIC DNA]</scope>
    <source>
        <strain>ATCC 35984 / DSM 28319 / BCRC 17069 / CCUG 31568 / BM 3577 / RP62A</strain>
    </source>
</reference>
<gene>
    <name type="ordered locus">SERP1180</name>
</gene>
<keyword id="KW-0963">Cytoplasm</keyword>
<keyword id="KW-0378">Hydrolase</keyword>
<keyword id="KW-0540">Nuclease</keyword>
<keyword id="KW-1185">Reference proteome</keyword>
<keyword id="KW-0690">Ribosome biogenesis</keyword>
<name>YQGF_STAEQ</name>
<accession>Q5HNT4</accession>
<comment type="function">
    <text evidence="1">Could be a nuclease involved in processing of the 5'-end of pre-16S rRNA.</text>
</comment>
<comment type="subcellular location">
    <subcellularLocation>
        <location evidence="1">Cytoplasm</location>
    </subcellularLocation>
</comment>
<comment type="similarity">
    <text evidence="1">Belongs to the YqgF nuclease family.</text>
</comment>
<evidence type="ECO:0000255" key="1">
    <source>
        <dbReference type="HAMAP-Rule" id="MF_00651"/>
    </source>
</evidence>
<proteinExistence type="inferred from homology"/>
<feature type="chain" id="PRO_0000172144" description="Putative pre-16S rRNA nuclease">
    <location>
        <begin position="1"/>
        <end position="142"/>
    </location>
</feature>
<sequence length="142" mass="15814">MLKHKILGLDVGSKTVGIAISDLMGWTAQGLDTLRINEEQDDLGIDQLVKIIKDNQVGTVVIGLPKNMNNSIGFRGEASIKYKEKLQESIPSIDIVMWDERLSTMAAERSLLEADVSRQKRKKVIDKMAAVFILQGYLDSIQ</sequence>
<organism>
    <name type="scientific">Staphylococcus epidermidis (strain ATCC 35984 / DSM 28319 / BCRC 17069 / CCUG 31568 / BM 3577 / RP62A)</name>
    <dbReference type="NCBI Taxonomy" id="176279"/>
    <lineage>
        <taxon>Bacteria</taxon>
        <taxon>Bacillati</taxon>
        <taxon>Bacillota</taxon>
        <taxon>Bacilli</taxon>
        <taxon>Bacillales</taxon>
        <taxon>Staphylococcaceae</taxon>
        <taxon>Staphylococcus</taxon>
    </lineage>
</organism>
<protein>
    <recommendedName>
        <fullName evidence="1">Putative pre-16S rRNA nuclease</fullName>
        <ecNumber evidence="1">3.1.-.-</ecNumber>
    </recommendedName>
</protein>
<dbReference type="EC" id="3.1.-.-" evidence="1"/>
<dbReference type="EMBL" id="CP000029">
    <property type="protein sequence ID" value="AAW54545.1"/>
    <property type="molecule type" value="Genomic_DNA"/>
</dbReference>
<dbReference type="SMR" id="Q5HNT4"/>
<dbReference type="STRING" id="176279.SERP1180"/>
<dbReference type="KEGG" id="ser:SERP1180"/>
<dbReference type="eggNOG" id="COG0816">
    <property type="taxonomic scope" value="Bacteria"/>
</dbReference>
<dbReference type="HOGENOM" id="CLU_098240_2_0_9"/>
<dbReference type="Proteomes" id="UP000000531">
    <property type="component" value="Chromosome"/>
</dbReference>
<dbReference type="GO" id="GO:0005829">
    <property type="term" value="C:cytosol"/>
    <property type="evidence" value="ECO:0007669"/>
    <property type="project" value="TreeGrafter"/>
</dbReference>
<dbReference type="GO" id="GO:0004518">
    <property type="term" value="F:nuclease activity"/>
    <property type="evidence" value="ECO:0007669"/>
    <property type="project" value="UniProtKB-KW"/>
</dbReference>
<dbReference type="GO" id="GO:0000967">
    <property type="term" value="P:rRNA 5'-end processing"/>
    <property type="evidence" value="ECO:0007669"/>
    <property type="project" value="UniProtKB-UniRule"/>
</dbReference>
<dbReference type="CDD" id="cd16964">
    <property type="entry name" value="YqgF"/>
    <property type="match status" value="1"/>
</dbReference>
<dbReference type="FunFam" id="3.30.420.140:FF:000003">
    <property type="entry name" value="Putative pre-16S rRNA nuclease"/>
    <property type="match status" value="1"/>
</dbReference>
<dbReference type="Gene3D" id="3.30.420.140">
    <property type="entry name" value="YqgF/RNase H-like domain"/>
    <property type="match status" value="1"/>
</dbReference>
<dbReference type="HAMAP" id="MF_00651">
    <property type="entry name" value="Nuclease_YqgF"/>
    <property type="match status" value="1"/>
</dbReference>
<dbReference type="InterPro" id="IPR012337">
    <property type="entry name" value="RNaseH-like_sf"/>
</dbReference>
<dbReference type="InterPro" id="IPR005227">
    <property type="entry name" value="YqgF"/>
</dbReference>
<dbReference type="InterPro" id="IPR006641">
    <property type="entry name" value="YqgF/RNaseH-like_dom"/>
</dbReference>
<dbReference type="InterPro" id="IPR037027">
    <property type="entry name" value="YqgF/RNaseH-like_dom_sf"/>
</dbReference>
<dbReference type="NCBIfam" id="TIGR00250">
    <property type="entry name" value="RNAse_H_YqgF"/>
    <property type="match status" value="1"/>
</dbReference>
<dbReference type="PANTHER" id="PTHR33317">
    <property type="entry name" value="POLYNUCLEOTIDYL TRANSFERASE, RIBONUCLEASE H-LIKE SUPERFAMILY PROTEIN"/>
    <property type="match status" value="1"/>
</dbReference>
<dbReference type="PANTHER" id="PTHR33317:SF4">
    <property type="entry name" value="POLYNUCLEOTIDYL TRANSFERASE, RIBONUCLEASE H-LIKE SUPERFAMILY PROTEIN"/>
    <property type="match status" value="1"/>
</dbReference>
<dbReference type="Pfam" id="PF03652">
    <property type="entry name" value="RuvX"/>
    <property type="match status" value="1"/>
</dbReference>
<dbReference type="SMART" id="SM00732">
    <property type="entry name" value="YqgFc"/>
    <property type="match status" value="1"/>
</dbReference>
<dbReference type="SUPFAM" id="SSF53098">
    <property type="entry name" value="Ribonuclease H-like"/>
    <property type="match status" value="1"/>
</dbReference>